<feature type="chain" id="PRO_0000144136" description="Caveolin-2">
    <location>
        <begin position="1"/>
        <end position="162"/>
    </location>
</feature>
<feature type="topological domain" description="Cytoplasmic" evidence="4">
    <location>
        <begin position="1"/>
        <end position="86"/>
    </location>
</feature>
<feature type="intramembrane region" description="Helical" evidence="4">
    <location>
        <begin position="87"/>
        <end position="107"/>
    </location>
</feature>
<feature type="topological domain" description="Cytoplasmic" evidence="4">
    <location>
        <begin position="108"/>
        <end position="162"/>
    </location>
</feature>
<feature type="modified residue" description="Phosphotyrosine; by SRC" evidence="2">
    <location>
        <position position="19"/>
    </location>
</feature>
<feature type="modified residue" description="Phosphoserine" evidence="3">
    <location>
        <position position="20"/>
    </location>
</feature>
<feature type="modified residue" description="Phosphoserine" evidence="2">
    <location>
        <position position="23"/>
    </location>
</feature>
<feature type="modified residue" description="Phosphotyrosine; by SRC" evidence="2">
    <location>
        <position position="27"/>
    </location>
</feature>
<sequence length="162" mass="18160">MGLETEKADVQLFMDDDSYSRHSSVDYADPDKFVDPGSDRDPHRLNSHLKVGFEDVIAEPVSTHSFDKVWICSHALFEMSKYVIYKFLTVFLAIPLAFAAGILFATLSCLHIWIIMPFVKTCLMVLPSVQTIWKSVTDVVIAPLCTSIGRSFSSVSLQLSHD</sequence>
<name>CAV2_BOVIN</name>
<evidence type="ECO:0000250" key="1"/>
<evidence type="ECO:0000250" key="2">
    <source>
        <dbReference type="UniProtKB" id="P51636"/>
    </source>
</evidence>
<evidence type="ECO:0000250" key="3">
    <source>
        <dbReference type="UniProtKB" id="Q9WVC3"/>
    </source>
</evidence>
<evidence type="ECO:0000255" key="4"/>
<evidence type="ECO:0000269" key="5">
    <source>
    </source>
</evidence>
<evidence type="ECO:0000305" key="6"/>
<dbReference type="EMBL" id="AY699947">
    <property type="protein sequence ID" value="AAU05317.1"/>
    <property type="molecule type" value="mRNA"/>
</dbReference>
<dbReference type="EMBL" id="DP000008">
    <property type="protein sequence ID" value="AAR16255.1"/>
    <property type="molecule type" value="Genomic_DNA"/>
</dbReference>
<dbReference type="EMBL" id="BC134620">
    <property type="protein sequence ID" value="AAI34621.1"/>
    <property type="molecule type" value="mRNA"/>
</dbReference>
<dbReference type="RefSeq" id="NP_001007809.1">
    <property type="nucleotide sequence ID" value="NM_001007808.1"/>
</dbReference>
<dbReference type="FunCoup" id="Q66WT7">
    <property type="interactions" value="541"/>
</dbReference>
<dbReference type="STRING" id="9913.ENSBTAP00000058170"/>
<dbReference type="PaxDb" id="9913-ENSBTAP00000054207"/>
<dbReference type="Ensembl" id="ENSBTAT00000095008.1">
    <property type="protein sequence ID" value="ENSBTAP00000083488.1"/>
    <property type="gene ID" value="ENSBTAG00000062162.1"/>
</dbReference>
<dbReference type="GeneID" id="493642"/>
<dbReference type="KEGG" id="bta:493642"/>
<dbReference type="CTD" id="858"/>
<dbReference type="VEuPathDB" id="HostDB:ENSBTAG00000049397"/>
<dbReference type="eggNOG" id="ENOG502RZYX">
    <property type="taxonomic scope" value="Eukaryota"/>
</dbReference>
<dbReference type="GeneTree" id="ENSGT00950000183006"/>
<dbReference type="HOGENOM" id="CLU_102582_2_0_1"/>
<dbReference type="InParanoid" id="Q66WT7"/>
<dbReference type="OMA" id="TRIFMDD"/>
<dbReference type="OrthoDB" id="5917823at2759"/>
<dbReference type="TreeFam" id="TF315736"/>
<dbReference type="Reactome" id="R-BTA-9009391">
    <property type="pathway name" value="Extra-nuclear estrogen signaling"/>
</dbReference>
<dbReference type="Proteomes" id="UP000009136">
    <property type="component" value="Chromosome 4"/>
</dbReference>
<dbReference type="Bgee" id="ENSBTAG00000049397">
    <property type="expression patterns" value="Expressed in omental fat pad and 103 other cell types or tissues"/>
</dbReference>
<dbReference type="GO" id="GO:0002080">
    <property type="term" value="C:acrosomal membrane"/>
    <property type="evidence" value="ECO:0007669"/>
    <property type="project" value="Ensembl"/>
</dbReference>
<dbReference type="GO" id="GO:0005901">
    <property type="term" value="C:caveola"/>
    <property type="evidence" value="ECO:0000314"/>
    <property type="project" value="BHF-UCL"/>
</dbReference>
<dbReference type="GO" id="GO:0002095">
    <property type="term" value="C:caveolar macromolecular signaling complex"/>
    <property type="evidence" value="ECO:0007669"/>
    <property type="project" value="Ensembl"/>
</dbReference>
<dbReference type="GO" id="GO:0031410">
    <property type="term" value="C:cytoplasmic vesicle"/>
    <property type="evidence" value="ECO:0000318"/>
    <property type="project" value="GO_Central"/>
</dbReference>
<dbReference type="GO" id="GO:0005925">
    <property type="term" value="C:focal adhesion"/>
    <property type="evidence" value="ECO:0007669"/>
    <property type="project" value="Ensembl"/>
</dbReference>
<dbReference type="GO" id="GO:0005794">
    <property type="term" value="C:Golgi apparatus"/>
    <property type="evidence" value="ECO:0000318"/>
    <property type="project" value="GO_Central"/>
</dbReference>
<dbReference type="GO" id="GO:0000139">
    <property type="term" value="C:Golgi membrane"/>
    <property type="evidence" value="ECO:0007669"/>
    <property type="project" value="UniProtKB-SubCell"/>
</dbReference>
<dbReference type="GO" id="GO:0005634">
    <property type="term" value="C:nucleus"/>
    <property type="evidence" value="ECO:0007669"/>
    <property type="project" value="UniProtKB-SubCell"/>
</dbReference>
<dbReference type="GO" id="GO:0048471">
    <property type="term" value="C:perinuclear region of cytoplasm"/>
    <property type="evidence" value="ECO:0000250"/>
    <property type="project" value="UniProtKB"/>
</dbReference>
<dbReference type="GO" id="GO:0044853">
    <property type="term" value="C:plasma membrane raft"/>
    <property type="evidence" value="ECO:0000250"/>
    <property type="project" value="UniProtKB"/>
</dbReference>
<dbReference type="GO" id="GO:0042383">
    <property type="term" value="C:sarcolemma"/>
    <property type="evidence" value="ECO:0000314"/>
    <property type="project" value="BHF-UCL"/>
</dbReference>
<dbReference type="GO" id="GO:0030133">
    <property type="term" value="C:transport vesicle"/>
    <property type="evidence" value="ECO:0007669"/>
    <property type="project" value="Ensembl"/>
</dbReference>
<dbReference type="GO" id="GO:0031748">
    <property type="term" value="F:D1 dopamine receptor binding"/>
    <property type="evidence" value="ECO:0000250"/>
    <property type="project" value="UniProtKB"/>
</dbReference>
<dbReference type="GO" id="GO:0060090">
    <property type="term" value="F:molecular adaptor activity"/>
    <property type="evidence" value="ECO:0000318"/>
    <property type="project" value="GO_Central"/>
</dbReference>
<dbReference type="GO" id="GO:0046982">
    <property type="term" value="F:protein heterodimerization activity"/>
    <property type="evidence" value="ECO:0007669"/>
    <property type="project" value="Ensembl"/>
</dbReference>
<dbReference type="GO" id="GO:0042803">
    <property type="term" value="F:protein homodimerization activity"/>
    <property type="evidence" value="ECO:0007669"/>
    <property type="project" value="Ensembl"/>
</dbReference>
<dbReference type="GO" id="GO:0019901">
    <property type="term" value="F:protein kinase binding"/>
    <property type="evidence" value="ECO:0000318"/>
    <property type="project" value="GO_Central"/>
</dbReference>
<dbReference type="GO" id="GO:0030674">
    <property type="term" value="F:protein-macromolecule adaptor activity"/>
    <property type="evidence" value="ECO:0007669"/>
    <property type="project" value="Ensembl"/>
</dbReference>
<dbReference type="GO" id="GO:0097110">
    <property type="term" value="F:scaffold protein binding"/>
    <property type="evidence" value="ECO:0007669"/>
    <property type="project" value="Ensembl"/>
</dbReference>
<dbReference type="GO" id="GO:0071711">
    <property type="term" value="P:basement membrane organization"/>
    <property type="evidence" value="ECO:0007669"/>
    <property type="project" value="Ensembl"/>
</dbReference>
<dbReference type="GO" id="GO:0070836">
    <property type="term" value="P:caveola assembly"/>
    <property type="evidence" value="ECO:0000250"/>
    <property type="project" value="UniProtKB"/>
</dbReference>
<dbReference type="GO" id="GO:0030154">
    <property type="term" value="P:cell differentiation"/>
    <property type="evidence" value="ECO:0000318"/>
    <property type="project" value="GO_Central"/>
</dbReference>
<dbReference type="GO" id="GO:0007029">
    <property type="term" value="P:endoplasmic reticulum organization"/>
    <property type="evidence" value="ECO:0000250"/>
    <property type="project" value="UniProtKB"/>
</dbReference>
<dbReference type="GO" id="GO:0001935">
    <property type="term" value="P:endothelial cell proliferation"/>
    <property type="evidence" value="ECO:0007669"/>
    <property type="project" value="Ensembl"/>
</dbReference>
<dbReference type="GO" id="GO:0008286">
    <property type="term" value="P:insulin receptor signaling pathway"/>
    <property type="evidence" value="ECO:0000318"/>
    <property type="project" value="GO_Central"/>
</dbReference>
<dbReference type="GO" id="GO:0007005">
    <property type="term" value="P:mitochondrion organization"/>
    <property type="evidence" value="ECO:0000250"/>
    <property type="project" value="UniProtKB"/>
</dbReference>
<dbReference type="GO" id="GO:0001937">
    <property type="term" value="P:negative regulation of endothelial cell proliferation"/>
    <property type="evidence" value="ECO:0000250"/>
    <property type="project" value="UniProtKB"/>
</dbReference>
<dbReference type="GO" id="GO:0014859">
    <property type="term" value="P:negative regulation of skeletal muscle cell proliferation"/>
    <property type="evidence" value="ECO:0007669"/>
    <property type="project" value="Ensembl"/>
</dbReference>
<dbReference type="GO" id="GO:0030512">
    <property type="term" value="P:negative regulation of transforming growth factor beta receptor signaling pathway"/>
    <property type="evidence" value="ECO:0007669"/>
    <property type="project" value="Ensembl"/>
</dbReference>
<dbReference type="GO" id="GO:0044794">
    <property type="term" value="P:positive regulation by host of viral process"/>
    <property type="evidence" value="ECO:0007669"/>
    <property type="project" value="Ensembl"/>
</dbReference>
<dbReference type="GO" id="GO:0060161">
    <property type="term" value="P:positive regulation of dopamine receptor signaling pathway"/>
    <property type="evidence" value="ECO:0000250"/>
    <property type="project" value="UniProtKB"/>
</dbReference>
<dbReference type="GO" id="GO:0001938">
    <property type="term" value="P:positive regulation of endothelial cell proliferation"/>
    <property type="evidence" value="ECO:0007669"/>
    <property type="project" value="Ensembl"/>
</dbReference>
<dbReference type="GO" id="GO:0043410">
    <property type="term" value="P:positive regulation of MAPK cascade"/>
    <property type="evidence" value="ECO:0007669"/>
    <property type="project" value="Ensembl"/>
</dbReference>
<dbReference type="GO" id="GO:0019065">
    <property type="term" value="P:receptor-mediated endocytosis of virus by host cell"/>
    <property type="evidence" value="ECO:0007669"/>
    <property type="project" value="Ensembl"/>
</dbReference>
<dbReference type="GO" id="GO:0051480">
    <property type="term" value="P:regulation of cytosolic calcium ion concentration"/>
    <property type="evidence" value="ECO:0000318"/>
    <property type="project" value="GO_Central"/>
</dbReference>
<dbReference type="GO" id="GO:0007088">
    <property type="term" value="P:regulation of mitotic nuclear division"/>
    <property type="evidence" value="ECO:0007669"/>
    <property type="project" value="Ensembl"/>
</dbReference>
<dbReference type="GO" id="GO:0014856">
    <property type="term" value="P:skeletal muscle cell proliferation"/>
    <property type="evidence" value="ECO:0007669"/>
    <property type="project" value="Ensembl"/>
</dbReference>
<dbReference type="GO" id="GO:0048741">
    <property type="term" value="P:skeletal muscle fiber development"/>
    <property type="evidence" value="ECO:0000250"/>
    <property type="project" value="UniProtKB"/>
</dbReference>
<dbReference type="GO" id="GO:0007179">
    <property type="term" value="P:transforming growth factor beta receptor signaling pathway"/>
    <property type="evidence" value="ECO:0007669"/>
    <property type="project" value="Ensembl"/>
</dbReference>
<dbReference type="GO" id="GO:0048278">
    <property type="term" value="P:vesicle docking"/>
    <property type="evidence" value="ECO:0000250"/>
    <property type="project" value="UniProtKB"/>
</dbReference>
<dbReference type="GO" id="GO:0006906">
    <property type="term" value="P:vesicle fusion"/>
    <property type="evidence" value="ECO:0000250"/>
    <property type="project" value="UniProtKB"/>
</dbReference>
<dbReference type="GO" id="GO:0019076">
    <property type="term" value="P:viral release from host cell"/>
    <property type="evidence" value="ECO:0007669"/>
    <property type="project" value="Ensembl"/>
</dbReference>
<dbReference type="InterPro" id="IPR001612">
    <property type="entry name" value="Caveolin"/>
</dbReference>
<dbReference type="InterPro" id="IPR018361">
    <property type="entry name" value="Caveolin_CS"/>
</dbReference>
<dbReference type="PANTHER" id="PTHR10844">
    <property type="entry name" value="CAVEOLIN"/>
    <property type="match status" value="1"/>
</dbReference>
<dbReference type="PANTHER" id="PTHR10844:SF3">
    <property type="entry name" value="CAVEOLIN-2"/>
    <property type="match status" value="1"/>
</dbReference>
<dbReference type="Pfam" id="PF01146">
    <property type="entry name" value="Caveolin"/>
    <property type="match status" value="1"/>
</dbReference>
<dbReference type="PROSITE" id="PS01210">
    <property type="entry name" value="CAVEOLIN"/>
    <property type="match status" value="1"/>
</dbReference>
<comment type="function">
    <text evidence="1">May act as a scaffolding protein within caveolar membranes. Interacts directly with G-protein alpha subunits and can functionally regulate their activity. Acts as an accessory protein in conjunction with CAV1 in targeting to lipid rafts and driving caveolae formation. Positive regulator of cellular mitogenesis of the MAPK signaling pathway. Required for the insulin-stimulated nuclear translocation and activation of MAPK1 and STAT3, and the subsequent regulation of cell cycle progression (By similarity).</text>
</comment>
<comment type="subunit">
    <text evidence="1">Monomer or homodimer. Interacts with CAV1; the interaction forms a stable heterooligomeric complex that is required for targeting to lipid rafts and for caveolae formation. Tyrosine phosphorylated forms do not form heterooligomers with the Tyr-19-phosphorylated form existing as a monomer or dimer, and the Tyr-27-form as a monomer only. Interacts (tyrosine phosphorylated form) with the SH2 domain-containing proteins, RASA1, NCK1 and SRC. Interacts (tyrosine phosphorylated form) with INSR, the interaction (Tyr-27-phosphorylated form) is increased on insulin stimulation. Interacts (Tyr-19 phosphorylated form) with MAPK1 (phosphorylated form); the interaction, promoted by insulin, leads to nuclear location and MAPK1 activation. Interacts with STAT3; the interaction is increased on insulin-induced tyrosine phosphorylation leading to STAT activation (By similarity).</text>
</comment>
<comment type="subcellular location">
    <subcellularLocation>
        <location evidence="5">Nucleus</location>
    </subcellularLocation>
    <subcellularLocation>
        <location evidence="5">Cytoplasm</location>
    </subcellularLocation>
    <subcellularLocation>
        <location evidence="5">Golgi apparatus membrane</location>
        <topology evidence="5">Peripheral membrane protein</topology>
    </subcellularLocation>
    <subcellularLocation>
        <location evidence="5">Cell membrane</location>
        <topology evidence="5">Peripheral membrane protein</topology>
    </subcellularLocation>
    <subcellularLocation>
        <location evidence="5">Membrane</location>
        <location evidence="5">Caveola</location>
        <topology evidence="5">Peripheral membrane protein</topology>
    </subcellularLocation>
    <text evidence="1">Potential hairpin-like structure in the membrane. Membrane protein of caveolae. Tyr-19-phosphorylated form is enriched at sites of cell-cell contact and is translocated to the nucleus in complex with MAPK1 in response to insulin. Tyr-27-phosphorylated form is located both in the cytoplasm and plasma membrane. CAV1-mediated Ser-23-phosphorylated form locates to the plasma membrane. Ser-36-phosphorylated form resides in intracellular compartments (By similarity).</text>
</comment>
<comment type="tissue specificity">
    <text evidence="5">Expressed in aortic endothelial cells.</text>
</comment>
<comment type="PTM">
    <text evidence="1">Phosphorylated on serine and tyrosine residues. CAV1 promotes phosphorylation on Ser-23 which then targets the complex to the plasma membrane, lipid rafts and caveolae. Phosphorylation on both Tyr-19 and Tyr-27 is required for insulin-induced 'Ser-727' phosphorylation of STAT3 and its activation. Phosphorylation on Tyr-19 is required for insulin-induced phosphorylation of MAPK1 and DNA binding of STAT3. Tyrosine phosphorylation is induced by both EGF and insulin (By similarity).</text>
</comment>
<comment type="similarity">
    <text evidence="6">Belongs to the caveolin family.</text>
</comment>
<keyword id="KW-1003">Cell membrane</keyword>
<keyword id="KW-0963">Cytoplasm</keyword>
<keyword id="KW-0333">Golgi apparatus</keyword>
<keyword id="KW-0472">Membrane</keyword>
<keyword id="KW-0539">Nucleus</keyword>
<keyword id="KW-0597">Phosphoprotein</keyword>
<keyword id="KW-1185">Reference proteome</keyword>
<gene>
    <name type="primary">CAV2</name>
</gene>
<accession>Q66WT7</accession>
<accession>A4D7R4</accession>
<accession>A7YWJ5</accession>
<protein>
    <recommendedName>
        <fullName>Caveolin-2</fullName>
    </recommendedName>
</protein>
<proteinExistence type="evidence at protein level"/>
<organism>
    <name type="scientific">Bos taurus</name>
    <name type="common">Bovine</name>
    <dbReference type="NCBI Taxonomy" id="9913"/>
    <lineage>
        <taxon>Eukaryota</taxon>
        <taxon>Metazoa</taxon>
        <taxon>Chordata</taxon>
        <taxon>Craniata</taxon>
        <taxon>Vertebrata</taxon>
        <taxon>Euteleostomi</taxon>
        <taxon>Mammalia</taxon>
        <taxon>Eutheria</taxon>
        <taxon>Laurasiatheria</taxon>
        <taxon>Artiodactyla</taxon>
        <taxon>Ruminantia</taxon>
        <taxon>Pecora</taxon>
        <taxon>Bovidae</taxon>
        <taxon>Bovinae</taxon>
        <taxon>Bos</taxon>
    </lineage>
</organism>
<reference key="1">
    <citation type="journal article" date="2004" name="Endothelium">
        <title>Bovine caveolin-2 cloning and effects of shear stress on its localization in bovine aortic endothelial cells.</title>
        <authorList>
            <person name="Boyd N."/>
            <person name="Park H."/>
            <person name="Sun W.P."/>
            <person name="Coleman S."/>
            <person name="Cherukuri R."/>
            <person name="Jo H."/>
        </authorList>
    </citation>
    <scope>NUCLEOTIDE SEQUENCE [MRNA]</scope>
    <scope>INTERACTION WITH CAV1</scope>
    <scope>TISSUE SPECIFICITY</scope>
    <scope>SUBCELLULAR LOCATION</scope>
</reference>
<reference key="2">
    <citation type="journal article" date="2003" name="Nature">
        <title>Comparative analyses of multi-species sequences from targeted genomic regions.</title>
        <authorList>
            <person name="Thomas J.W."/>
            <person name="Touchman J.W."/>
            <person name="Blakesley R.W."/>
            <person name="Bouffard G.G."/>
            <person name="Beckstrom-Sternberg S.M."/>
            <person name="Margulies E.H."/>
            <person name="Blanchette M."/>
            <person name="Siepel A.C."/>
            <person name="Thomas P.J."/>
            <person name="McDowell J.C."/>
            <person name="Maskeri B."/>
            <person name="Hansen N.F."/>
            <person name="Schwartz M.S."/>
            <person name="Weber R.J."/>
            <person name="Kent W.J."/>
            <person name="Karolchik D."/>
            <person name="Bruen T.C."/>
            <person name="Bevan R."/>
            <person name="Cutler D.J."/>
            <person name="Schwartz S."/>
            <person name="Elnitski L."/>
            <person name="Idol J.R."/>
            <person name="Prasad A.B."/>
            <person name="Lee-Lin S.-Q."/>
            <person name="Maduro V.V.B."/>
            <person name="Summers T.J."/>
            <person name="Portnoy M.E."/>
            <person name="Dietrich N.L."/>
            <person name="Akhter N."/>
            <person name="Ayele K."/>
            <person name="Benjamin B."/>
            <person name="Cariaga K."/>
            <person name="Brinkley C.P."/>
            <person name="Brooks S.Y."/>
            <person name="Granite S."/>
            <person name="Guan X."/>
            <person name="Gupta J."/>
            <person name="Haghighi P."/>
            <person name="Ho S.-L."/>
            <person name="Huang M.C."/>
            <person name="Karlins E."/>
            <person name="Laric P.L."/>
            <person name="Legaspi R."/>
            <person name="Lim M.J."/>
            <person name="Maduro Q.L."/>
            <person name="Masiello C.A."/>
            <person name="Mastrian S.D."/>
            <person name="McCloskey J.C."/>
            <person name="Pearson R."/>
            <person name="Stantripop S."/>
            <person name="Tiongson E.E."/>
            <person name="Tran J.T."/>
            <person name="Tsurgeon C."/>
            <person name="Vogt J.L."/>
            <person name="Walker M.A."/>
            <person name="Wetherby K.D."/>
            <person name="Wiggins L.S."/>
            <person name="Young A.C."/>
            <person name="Zhang L.-H."/>
            <person name="Osoegawa K."/>
            <person name="Zhu B."/>
            <person name="Zhao B."/>
            <person name="Shu C.L."/>
            <person name="De Jong P.J."/>
            <person name="Lawrence C.E."/>
            <person name="Smit A.F."/>
            <person name="Chakravarti A."/>
            <person name="Haussler D."/>
            <person name="Green P."/>
            <person name="Miller W."/>
            <person name="Green E.D."/>
        </authorList>
    </citation>
    <scope>NUCLEOTIDE SEQUENCE [LARGE SCALE GENOMIC DNA]</scope>
</reference>
<reference key="3">
    <citation type="submission" date="2007-03" db="EMBL/GenBank/DDBJ databases">
        <authorList>
            <consortium name="NIH - Mammalian Gene Collection (MGC) project"/>
        </authorList>
    </citation>
    <scope>NUCLEOTIDE SEQUENCE [LARGE SCALE MRNA]</scope>
    <source>
        <strain>Hereford</strain>
        <tissue>Fetal skin</tissue>
    </source>
</reference>